<keyword id="KW-0963">Cytoplasm</keyword>
<keyword id="KW-0690">Ribosome biogenesis</keyword>
<proteinExistence type="inferred from homology"/>
<accession>B4S4S4</accession>
<name>RIMP_PROA2</name>
<protein>
    <recommendedName>
        <fullName evidence="1">Ribosome maturation factor RimP</fullName>
    </recommendedName>
</protein>
<comment type="function">
    <text evidence="1">Required for maturation of 30S ribosomal subunits.</text>
</comment>
<comment type="subcellular location">
    <subcellularLocation>
        <location evidence="1">Cytoplasm</location>
    </subcellularLocation>
</comment>
<comment type="similarity">
    <text evidence="1">Belongs to the RimP family.</text>
</comment>
<reference key="1">
    <citation type="submission" date="2008-06" db="EMBL/GenBank/DDBJ databases">
        <title>Complete sequence of chromosome of Prosthecochloris aestuarii DSM 271.</title>
        <authorList>
            <consortium name="US DOE Joint Genome Institute"/>
            <person name="Lucas S."/>
            <person name="Copeland A."/>
            <person name="Lapidus A."/>
            <person name="Glavina del Rio T."/>
            <person name="Dalin E."/>
            <person name="Tice H."/>
            <person name="Bruce D."/>
            <person name="Goodwin L."/>
            <person name="Pitluck S."/>
            <person name="Schmutz J."/>
            <person name="Larimer F."/>
            <person name="Land M."/>
            <person name="Hauser L."/>
            <person name="Kyrpides N."/>
            <person name="Anderson I."/>
            <person name="Liu Z."/>
            <person name="Li T."/>
            <person name="Zhao F."/>
            <person name="Overmann J."/>
            <person name="Bryant D.A."/>
            <person name="Richardson P."/>
        </authorList>
    </citation>
    <scope>NUCLEOTIDE SEQUENCE [LARGE SCALE GENOMIC DNA]</scope>
    <source>
        <strain>DSM 271 / SK 413</strain>
    </source>
</reference>
<gene>
    <name evidence="1" type="primary">rimP</name>
    <name type="ordered locus">Paes_0365</name>
</gene>
<dbReference type="EMBL" id="CP001108">
    <property type="protein sequence ID" value="ACF45422.1"/>
    <property type="molecule type" value="Genomic_DNA"/>
</dbReference>
<dbReference type="RefSeq" id="WP_012504959.1">
    <property type="nucleotide sequence ID" value="NC_011059.1"/>
</dbReference>
<dbReference type="SMR" id="B4S4S4"/>
<dbReference type="STRING" id="290512.Paes_0365"/>
<dbReference type="KEGG" id="paa:Paes_0365"/>
<dbReference type="eggNOG" id="COG0779">
    <property type="taxonomic scope" value="Bacteria"/>
</dbReference>
<dbReference type="HOGENOM" id="CLU_070525_3_1_10"/>
<dbReference type="Proteomes" id="UP000002725">
    <property type="component" value="Chromosome"/>
</dbReference>
<dbReference type="GO" id="GO:0005829">
    <property type="term" value="C:cytosol"/>
    <property type="evidence" value="ECO:0007669"/>
    <property type="project" value="TreeGrafter"/>
</dbReference>
<dbReference type="GO" id="GO:0000028">
    <property type="term" value="P:ribosomal small subunit assembly"/>
    <property type="evidence" value="ECO:0007669"/>
    <property type="project" value="TreeGrafter"/>
</dbReference>
<dbReference type="GO" id="GO:0006412">
    <property type="term" value="P:translation"/>
    <property type="evidence" value="ECO:0007669"/>
    <property type="project" value="TreeGrafter"/>
</dbReference>
<dbReference type="Gene3D" id="3.30.300.70">
    <property type="entry name" value="RimP-like superfamily, N-terminal"/>
    <property type="match status" value="1"/>
</dbReference>
<dbReference type="HAMAP" id="MF_01077">
    <property type="entry name" value="RimP"/>
    <property type="match status" value="1"/>
</dbReference>
<dbReference type="InterPro" id="IPR003728">
    <property type="entry name" value="Ribosome_maturation_RimP"/>
</dbReference>
<dbReference type="InterPro" id="IPR028989">
    <property type="entry name" value="RimP_N"/>
</dbReference>
<dbReference type="InterPro" id="IPR035956">
    <property type="entry name" value="RimP_N_sf"/>
</dbReference>
<dbReference type="NCBIfam" id="NF011234">
    <property type="entry name" value="PRK14641.1"/>
    <property type="match status" value="1"/>
</dbReference>
<dbReference type="PANTHER" id="PTHR33867">
    <property type="entry name" value="RIBOSOME MATURATION FACTOR RIMP"/>
    <property type="match status" value="1"/>
</dbReference>
<dbReference type="PANTHER" id="PTHR33867:SF1">
    <property type="entry name" value="RIBOSOME MATURATION FACTOR RIMP"/>
    <property type="match status" value="1"/>
</dbReference>
<dbReference type="Pfam" id="PF02576">
    <property type="entry name" value="RimP_N"/>
    <property type="match status" value="1"/>
</dbReference>
<dbReference type="SUPFAM" id="SSF75420">
    <property type="entry name" value="YhbC-like, N-terminal domain"/>
    <property type="match status" value="1"/>
</dbReference>
<organism>
    <name type="scientific">Prosthecochloris aestuarii (strain DSM 271 / SK 413)</name>
    <dbReference type="NCBI Taxonomy" id="290512"/>
    <lineage>
        <taxon>Bacteria</taxon>
        <taxon>Pseudomonadati</taxon>
        <taxon>Chlorobiota</taxon>
        <taxon>Chlorobiia</taxon>
        <taxon>Chlorobiales</taxon>
        <taxon>Chlorobiaceae</taxon>
        <taxon>Prosthecochloris</taxon>
    </lineage>
</organism>
<sequence length="179" mass="19876">MVEDRLISGIEACVASFSREVSTGKESEIFLVDLAVKAAGRSVKIEVLVDSEQGIVISQCAALSRRIRDMIESDDELQEVYGEVFELMVSSPGLGGPIRHVRQYIRHTGRLLSVRYRDDAGSVHDVTGRLIEVDLAEGHEPFLVLEPVRSGRKKNGSLPPSRLKMMLDRIDKAVVQVEF</sequence>
<evidence type="ECO:0000255" key="1">
    <source>
        <dbReference type="HAMAP-Rule" id="MF_01077"/>
    </source>
</evidence>
<feature type="chain" id="PRO_0000384735" description="Ribosome maturation factor RimP">
    <location>
        <begin position="1"/>
        <end position="179"/>
    </location>
</feature>